<evidence type="ECO:0000255" key="1">
    <source>
        <dbReference type="HAMAP-Rule" id="MF_01633"/>
    </source>
</evidence>
<protein>
    <recommendedName>
        <fullName evidence="1">7-cyano-7-deazaguanine synthase</fullName>
        <ecNumber evidence="1">6.3.4.20</ecNumber>
    </recommendedName>
    <alternativeName>
        <fullName evidence="1">7-cyano-7-carbaguanine synthase</fullName>
    </alternativeName>
    <alternativeName>
        <fullName evidence="1">PreQ(0) synthase</fullName>
    </alternativeName>
    <alternativeName>
        <fullName evidence="1">Queuosine biosynthesis protein QueC</fullName>
    </alternativeName>
</protein>
<gene>
    <name evidence="1" type="primary">queC</name>
    <name type="ordered locus">HAPS_1387</name>
</gene>
<keyword id="KW-0067">ATP-binding</keyword>
<keyword id="KW-0436">Ligase</keyword>
<keyword id="KW-0479">Metal-binding</keyword>
<keyword id="KW-0547">Nucleotide-binding</keyword>
<keyword id="KW-0671">Queuosine biosynthesis</keyword>
<keyword id="KW-1185">Reference proteome</keyword>
<keyword id="KW-0862">Zinc</keyword>
<organism>
    <name type="scientific">Glaesserella parasuis serovar 5 (strain SH0165)</name>
    <name type="common">Haemophilus parasuis</name>
    <dbReference type="NCBI Taxonomy" id="557723"/>
    <lineage>
        <taxon>Bacteria</taxon>
        <taxon>Pseudomonadati</taxon>
        <taxon>Pseudomonadota</taxon>
        <taxon>Gammaproteobacteria</taxon>
        <taxon>Pasteurellales</taxon>
        <taxon>Pasteurellaceae</taxon>
        <taxon>Glaesserella</taxon>
    </lineage>
</organism>
<name>QUEC_GLAP5</name>
<feature type="chain" id="PRO_1000186603" description="7-cyano-7-deazaguanine synthase">
    <location>
        <begin position="1"/>
        <end position="219"/>
    </location>
</feature>
<feature type="binding site" evidence="1">
    <location>
        <begin position="11"/>
        <end position="21"/>
    </location>
    <ligand>
        <name>ATP</name>
        <dbReference type="ChEBI" id="CHEBI:30616"/>
    </ligand>
</feature>
<feature type="binding site" evidence="1">
    <location>
        <position position="188"/>
    </location>
    <ligand>
        <name>Zn(2+)</name>
        <dbReference type="ChEBI" id="CHEBI:29105"/>
    </ligand>
</feature>
<feature type="binding site" evidence="1">
    <location>
        <position position="196"/>
    </location>
    <ligand>
        <name>Zn(2+)</name>
        <dbReference type="ChEBI" id="CHEBI:29105"/>
    </ligand>
</feature>
<feature type="binding site" evidence="1">
    <location>
        <position position="199"/>
    </location>
    <ligand>
        <name>Zn(2+)</name>
        <dbReference type="ChEBI" id="CHEBI:29105"/>
    </ligand>
</feature>
<feature type="binding site" evidence="1">
    <location>
        <position position="202"/>
    </location>
    <ligand>
        <name>Zn(2+)</name>
        <dbReference type="ChEBI" id="CHEBI:29105"/>
    </ligand>
</feature>
<accession>B8F6L5</accession>
<sequence length="219" mass="24523">MKPTPKAVVIFSGGQDSTTCLFLAIKEFGKENVEVVTFQYGQRHAIELDKARWIAQDLGVKQTLIDTSVIKAITTNALMDDQAEIKQTGNTPNTFVDGRNALFLLYTAIYAKSQGIQTIYTGVCETDFSGYPDCRDVFIKSMNVTLNLAMDYNFNIRTPLMYLTKKETWALADQLGAFDYIRTHTHTCYLGVEGGCHTCPSCLLREKGLNEYLEEKGNV</sequence>
<dbReference type="EC" id="6.3.4.20" evidence="1"/>
<dbReference type="EMBL" id="CP001321">
    <property type="protein sequence ID" value="ACL32967.1"/>
    <property type="molecule type" value="Genomic_DNA"/>
</dbReference>
<dbReference type="RefSeq" id="WP_015939763.1">
    <property type="nucleotide sequence ID" value="NC_011852.1"/>
</dbReference>
<dbReference type="SMR" id="B8F6L5"/>
<dbReference type="STRING" id="557723.HAPS_1387"/>
<dbReference type="KEGG" id="hap:HAPS_1387"/>
<dbReference type="PATRIC" id="fig|557723.8.peg.1361"/>
<dbReference type="HOGENOM" id="CLU_081854_0_0_6"/>
<dbReference type="UniPathway" id="UPA00391"/>
<dbReference type="Proteomes" id="UP000006743">
    <property type="component" value="Chromosome"/>
</dbReference>
<dbReference type="GO" id="GO:0005524">
    <property type="term" value="F:ATP binding"/>
    <property type="evidence" value="ECO:0007669"/>
    <property type="project" value="UniProtKB-UniRule"/>
</dbReference>
<dbReference type="GO" id="GO:0016879">
    <property type="term" value="F:ligase activity, forming carbon-nitrogen bonds"/>
    <property type="evidence" value="ECO:0007669"/>
    <property type="project" value="UniProtKB-UniRule"/>
</dbReference>
<dbReference type="GO" id="GO:0008270">
    <property type="term" value="F:zinc ion binding"/>
    <property type="evidence" value="ECO:0007669"/>
    <property type="project" value="UniProtKB-UniRule"/>
</dbReference>
<dbReference type="GO" id="GO:0008616">
    <property type="term" value="P:queuosine biosynthetic process"/>
    <property type="evidence" value="ECO:0007669"/>
    <property type="project" value="UniProtKB-UniRule"/>
</dbReference>
<dbReference type="CDD" id="cd01995">
    <property type="entry name" value="QueC-like"/>
    <property type="match status" value="1"/>
</dbReference>
<dbReference type="Gene3D" id="3.40.50.620">
    <property type="entry name" value="HUPs"/>
    <property type="match status" value="1"/>
</dbReference>
<dbReference type="HAMAP" id="MF_01633">
    <property type="entry name" value="QueC"/>
    <property type="match status" value="1"/>
</dbReference>
<dbReference type="InterPro" id="IPR018317">
    <property type="entry name" value="QueC"/>
</dbReference>
<dbReference type="InterPro" id="IPR014729">
    <property type="entry name" value="Rossmann-like_a/b/a_fold"/>
</dbReference>
<dbReference type="NCBIfam" id="TIGR00364">
    <property type="entry name" value="7-cyano-7-deazaguanine synthase QueC"/>
    <property type="match status" value="1"/>
</dbReference>
<dbReference type="PANTHER" id="PTHR42914">
    <property type="entry name" value="7-CYANO-7-DEAZAGUANINE SYNTHASE"/>
    <property type="match status" value="1"/>
</dbReference>
<dbReference type="PANTHER" id="PTHR42914:SF1">
    <property type="entry name" value="7-CYANO-7-DEAZAGUANINE SYNTHASE"/>
    <property type="match status" value="1"/>
</dbReference>
<dbReference type="Pfam" id="PF06508">
    <property type="entry name" value="QueC"/>
    <property type="match status" value="1"/>
</dbReference>
<dbReference type="PIRSF" id="PIRSF006293">
    <property type="entry name" value="ExsB"/>
    <property type="match status" value="1"/>
</dbReference>
<dbReference type="SUPFAM" id="SSF52402">
    <property type="entry name" value="Adenine nucleotide alpha hydrolases-like"/>
    <property type="match status" value="1"/>
</dbReference>
<reference key="1">
    <citation type="journal article" date="2009" name="J. Bacteriol.">
        <title>Complete genome sequence of Haemophilus parasuis SH0165.</title>
        <authorList>
            <person name="Yue M."/>
            <person name="Yang F."/>
            <person name="Yang J."/>
            <person name="Bei W."/>
            <person name="Cai X."/>
            <person name="Chen L."/>
            <person name="Dong J."/>
            <person name="Zhou R."/>
            <person name="Jin M."/>
            <person name="Jin Q."/>
            <person name="Chen H."/>
        </authorList>
    </citation>
    <scope>NUCLEOTIDE SEQUENCE [LARGE SCALE GENOMIC DNA]</scope>
    <source>
        <strain>SH0165</strain>
    </source>
</reference>
<proteinExistence type="inferred from homology"/>
<comment type="function">
    <text evidence="1">Catalyzes the ATP-dependent conversion of 7-carboxy-7-deazaguanine (CDG) to 7-cyano-7-deazaguanine (preQ(0)).</text>
</comment>
<comment type="catalytic activity">
    <reaction evidence="1">
        <text>7-carboxy-7-deazaguanine + NH4(+) + ATP = 7-cyano-7-deazaguanine + ADP + phosphate + H2O + H(+)</text>
        <dbReference type="Rhea" id="RHEA:27982"/>
        <dbReference type="ChEBI" id="CHEBI:15377"/>
        <dbReference type="ChEBI" id="CHEBI:15378"/>
        <dbReference type="ChEBI" id="CHEBI:28938"/>
        <dbReference type="ChEBI" id="CHEBI:30616"/>
        <dbReference type="ChEBI" id="CHEBI:43474"/>
        <dbReference type="ChEBI" id="CHEBI:45075"/>
        <dbReference type="ChEBI" id="CHEBI:61036"/>
        <dbReference type="ChEBI" id="CHEBI:456216"/>
        <dbReference type="EC" id="6.3.4.20"/>
    </reaction>
</comment>
<comment type="cofactor">
    <cofactor evidence="1">
        <name>Zn(2+)</name>
        <dbReference type="ChEBI" id="CHEBI:29105"/>
    </cofactor>
    <text evidence="1">Binds 1 zinc ion per subunit.</text>
</comment>
<comment type="pathway">
    <text evidence="1">Purine metabolism; 7-cyano-7-deazaguanine biosynthesis.</text>
</comment>
<comment type="similarity">
    <text evidence="1">Belongs to the QueC family.</text>
</comment>